<sequence>MSFWDYFRSNKQATASVAKERLQIIVAHERSQRNQPDYLPQLQQEILEVIGKYVKINREDIQVQIDRNDDCAVLELNITLPE</sequence>
<proteinExistence type="inferred from homology"/>
<name>MINE_HAHCH</name>
<dbReference type="EMBL" id="CP000155">
    <property type="protein sequence ID" value="ABC28588.1"/>
    <property type="molecule type" value="Genomic_DNA"/>
</dbReference>
<dbReference type="RefSeq" id="WP_011395660.1">
    <property type="nucleotide sequence ID" value="NC_007645.1"/>
</dbReference>
<dbReference type="SMR" id="Q2SL86"/>
<dbReference type="STRING" id="349521.HCH_01742"/>
<dbReference type="KEGG" id="hch:HCH_01742"/>
<dbReference type="eggNOG" id="COG0851">
    <property type="taxonomic scope" value="Bacteria"/>
</dbReference>
<dbReference type="HOGENOM" id="CLU_137929_2_1_6"/>
<dbReference type="OrthoDB" id="9802655at2"/>
<dbReference type="Proteomes" id="UP000000238">
    <property type="component" value="Chromosome"/>
</dbReference>
<dbReference type="GO" id="GO:0051301">
    <property type="term" value="P:cell division"/>
    <property type="evidence" value="ECO:0007669"/>
    <property type="project" value="UniProtKB-KW"/>
</dbReference>
<dbReference type="GO" id="GO:0032955">
    <property type="term" value="P:regulation of division septum assembly"/>
    <property type="evidence" value="ECO:0007669"/>
    <property type="project" value="InterPro"/>
</dbReference>
<dbReference type="FunFam" id="3.30.1070.10:FF:000001">
    <property type="entry name" value="Cell division topological specificity factor"/>
    <property type="match status" value="1"/>
</dbReference>
<dbReference type="Gene3D" id="3.30.1070.10">
    <property type="entry name" value="Cell division topological specificity factor MinE"/>
    <property type="match status" value="1"/>
</dbReference>
<dbReference type="HAMAP" id="MF_00262">
    <property type="entry name" value="MinE"/>
    <property type="match status" value="1"/>
</dbReference>
<dbReference type="InterPro" id="IPR005527">
    <property type="entry name" value="MinE"/>
</dbReference>
<dbReference type="InterPro" id="IPR036707">
    <property type="entry name" value="MinE_sf"/>
</dbReference>
<dbReference type="NCBIfam" id="TIGR01215">
    <property type="entry name" value="minE"/>
    <property type="match status" value="1"/>
</dbReference>
<dbReference type="NCBIfam" id="NF001422">
    <property type="entry name" value="PRK00296.1"/>
    <property type="match status" value="1"/>
</dbReference>
<dbReference type="NCBIfam" id="NF010595">
    <property type="entry name" value="PRK13989.1"/>
    <property type="match status" value="1"/>
</dbReference>
<dbReference type="Pfam" id="PF03776">
    <property type="entry name" value="MinE"/>
    <property type="match status" value="1"/>
</dbReference>
<dbReference type="SUPFAM" id="SSF55229">
    <property type="entry name" value="Cell division protein MinE topological specificity domain"/>
    <property type="match status" value="1"/>
</dbReference>
<evidence type="ECO:0000255" key="1">
    <source>
        <dbReference type="HAMAP-Rule" id="MF_00262"/>
    </source>
</evidence>
<reference key="1">
    <citation type="journal article" date="2005" name="Nucleic Acids Res.">
        <title>Genomic blueprint of Hahella chejuensis, a marine microbe producing an algicidal agent.</title>
        <authorList>
            <person name="Jeong H."/>
            <person name="Yim J.H."/>
            <person name="Lee C."/>
            <person name="Choi S.-H."/>
            <person name="Park Y.K."/>
            <person name="Yoon S.H."/>
            <person name="Hur C.-G."/>
            <person name="Kang H.-Y."/>
            <person name="Kim D."/>
            <person name="Lee H.H."/>
            <person name="Park K.H."/>
            <person name="Park S.-H."/>
            <person name="Park H.-S."/>
            <person name="Lee H.K."/>
            <person name="Oh T.K."/>
            <person name="Kim J.F."/>
        </authorList>
    </citation>
    <scope>NUCLEOTIDE SEQUENCE [LARGE SCALE GENOMIC DNA]</scope>
    <source>
        <strain>KCTC 2396</strain>
    </source>
</reference>
<protein>
    <recommendedName>
        <fullName evidence="1">Cell division topological specificity factor</fullName>
    </recommendedName>
</protein>
<keyword id="KW-0131">Cell cycle</keyword>
<keyword id="KW-0132">Cell division</keyword>
<keyword id="KW-1185">Reference proteome</keyword>
<comment type="function">
    <text evidence="1">Prevents the cell division inhibition by proteins MinC and MinD at internal division sites while permitting inhibition at polar sites. This ensures cell division at the proper site by restricting the formation of a division septum at the midpoint of the long axis of the cell.</text>
</comment>
<comment type="similarity">
    <text evidence="1">Belongs to the MinE family.</text>
</comment>
<accession>Q2SL86</accession>
<feature type="chain" id="PRO_0000298124" description="Cell division topological specificity factor">
    <location>
        <begin position="1"/>
        <end position="82"/>
    </location>
</feature>
<gene>
    <name evidence="1" type="primary">minE</name>
    <name type="ordered locus">HCH_01742</name>
</gene>
<organism>
    <name type="scientific">Hahella chejuensis (strain KCTC 2396)</name>
    <dbReference type="NCBI Taxonomy" id="349521"/>
    <lineage>
        <taxon>Bacteria</taxon>
        <taxon>Pseudomonadati</taxon>
        <taxon>Pseudomonadota</taxon>
        <taxon>Gammaproteobacteria</taxon>
        <taxon>Oceanospirillales</taxon>
        <taxon>Hahellaceae</taxon>
        <taxon>Hahella</taxon>
    </lineage>
</organism>